<sequence>MKLPVAQYSAPDGVEKSFAPIRDDPRYMTTEGRTTGPSDHVLNAGQIDRDKPSEPERTKDGSQLTYLGQLRTQLTGLQDDINEFLTGRMELAKNKKKAGADEKRIQEEINQLLDGGDGDEDAV</sequence>
<gene>
    <name type="primary">GON7</name>
    <name type="synonym">LDB6</name>
    <name type="synonym">PCC2</name>
    <name type="ordered locus">YJL184W</name>
    <name type="ORF">J0420</name>
</gene>
<reference key="1">
    <citation type="journal article" date="1996" name="EMBO J.">
        <title>Complete nucleotide sequence of Saccharomyces cerevisiae chromosome X.</title>
        <authorList>
            <person name="Galibert F."/>
            <person name="Alexandraki D."/>
            <person name="Baur A."/>
            <person name="Boles E."/>
            <person name="Chalwatzis N."/>
            <person name="Chuat J.-C."/>
            <person name="Coster F."/>
            <person name="Cziepluch C."/>
            <person name="de Haan M."/>
            <person name="Domdey H."/>
            <person name="Durand P."/>
            <person name="Entian K.-D."/>
            <person name="Gatius M."/>
            <person name="Goffeau A."/>
            <person name="Grivell L.A."/>
            <person name="Hennemann A."/>
            <person name="Herbert C.J."/>
            <person name="Heumann K."/>
            <person name="Hilger F."/>
            <person name="Hollenberg C.P."/>
            <person name="Huang M.-E."/>
            <person name="Jacq C."/>
            <person name="Jauniaux J.-C."/>
            <person name="Katsoulou C."/>
            <person name="Kirchrath L."/>
            <person name="Kleine K."/>
            <person name="Kordes E."/>
            <person name="Koetter P."/>
            <person name="Liebl S."/>
            <person name="Louis E.J."/>
            <person name="Manus V."/>
            <person name="Mewes H.-W."/>
            <person name="Miosga T."/>
            <person name="Obermaier B."/>
            <person name="Perea J."/>
            <person name="Pohl T.M."/>
            <person name="Portetelle D."/>
            <person name="Pujol A."/>
            <person name="Purnelle B."/>
            <person name="Ramezani Rad M."/>
            <person name="Rasmussen S.W."/>
            <person name="Rose M."/>
            <person name="Rossau R."/>
            <person name="Schaaff-Gerstenschlaeger I."/>
            <person name="Smits P.H.M."/>
            <person name="Scarcez T."/>
            <person name="Soriano N."/>
            <person name="To Van D."/>
            <person name="Tzermia M."/>
            <person name="Van Broekhoven A."/>
            <person name="Vandenbol M."/>
            <person name="Wedler H."/>
            <person name="von Wettstein D."/>
            <person name="Wambutt R."/>
            <person name="Zagulski M."/>
            <person name="Zollner A."/>
            <person name="Karpfinger-Hartl L."/>
        </authorList>
    </citation>
    <scope>NUCLEOTIDE SEQUENCE [LARGE SCALE GENOMIC DNA]</scope>
    <source>
        <strain>ATCC 204508 / S288c</strain>
    </source>
</reference>
<reference key="2">
    <citation type="journal article" date="2014" name="G3 (Bethesda)">
        <title>The reference genome sequence of Saccharomyces cerevisiae: Then and now.</title>
        <authorList>
            <person name="Engel S.R."/>
            <person name="Dietrich F.S."/>
            <person name="Fisk D.G."/>
            <person name="Binkley G."/>
            <person name="Balakrishnan R."/>
            <person name="Costanzo M.C."/>
            <person name="Dwight S.S."/>
            <person name="Hitz B.C."/>
            <person name="Karra K."/>
            <person name="Nash R.S."/>
            <person name="Weng S."/>
            <person name="Wong E.D."/>
            <person name="Lloyd P."/>
            <person name="Skrzypek M.S."/>
            <person name="Miyasato S.R."/>
            <person name="Simison M."/>
            <person name="Cherry J.M."/>
        </authorList>
    </citation>
    <scope>GENOME REANNOTATION</scope>
    <source>
        <strain>ATCC 204508 / S288c</strain>
    </source>
</reference>
<reference key="3">
    <citation type="journal article" date="2007" name="Genome Res.">
        <title>Approaching a complete repository of sequence-verified protein-encoding clones for Saccharomyces cerevisiae.</title>
        <authorList>
            <person name="Hu Y."/>
            <person name="Rolfs A."/>
            <person name="Bhullar B."/>
            <person name="Murthy T.V.S."/>
            <person name="Zhu C."/>
            <person name="Berger M.F."/>
            <person name="Camargo A.A."/>
            <person name="Kelley F."/>
            <person name="McCarron S."/>
            <person name="Jepson D."/>
            <person name="Richardson A."/>
            <person name="Raphael J."/>
            <person name="Moreira D."/>
            <person name="Taycher E."/>
            <person name="Zuo D."/>
            <person name="Mohr S."/>
            <person name="Kane M.F."/>
            <person name="Williamson J."/>
            <person name="Simpson A.J.G."/>
            <person name="Bulyk M.L."/>
            <person name="Harlow E."/>
            <person name="Marsischky G."/>
            <person name="Kolodner R.D."/>
            <person name="LaBaer J."/>
        </authorList>
    </citation>
    <scope>NUCLEOTIDE SEQUENCE [GENOMIC DNA]</scope>
    <source>
        <strain>ATCC 204508 / S288c</strain>
    </source>
</reference>
<reference key="4">
    <citation type="journal article" date="2000" name="J. Biol. Chem.">
        <title>Highly hydrophilic proteins in prokaryotes and eukaryotes are common during conditions of water deficit.</title>
        <authorList>
            <person name="Garay-Arroyo A."/>
            <person name="Colmenero-Flores J.M."/>
            <person name="Garciarrubio A."/>
            <person name="Covarrubias A.A."/>
        </authorList>
    </citation>
    <scope>INDUCTION</scope>
</reference>
<reference key="5">
    <citation type="journal article" date="2003" name="Mol. Cell">
        <title>Assigning function to yeast proteins by integration of technologies.</title>
        <authorList>
            <person name="Hazbun T.R."/>
            <person name="Malmstroem L."/>
            <person name="Anderson S."/>
            <person name="Graczyk B.J."/>
            <person name="Fox B."/>
            <person name="Riffle M."/>
            <person name="Sundin B.A."/>
            <person name="Aranda J.D."/>
            <person name="McDonald W.H."/>
            <person name="Chiu C.-H."/>
            <person name="Snydsman B.E."/>
            <person name="Bradley P."/>
            <person name="Muller E.G.D."/>
            <person name="Fields S."/>
            <person name="Baker D."/>
            <person name="Yates J.R. III"/>
            <person name="Davis T.N."/>
        </authorList>
    </citation>
    <scope>IDENTIFICATION BY MASS SPECTROMETRY</scope>
</reference>
<reference key="6">
    <citation type="journal article" date="2003" name="Nature">
        <title>Global analysis of protein expression in yeast.</title>
        <authorList>
            <person name="Ghaemmaghami S."/>
            <person name="Huh W.-K."/>
            <person name="Bower K."/>
            <person name="Howson R.W."/>
            <person name="Belle A."/>
            <person name="Dephoure N."/>
            <person name="O'Shea E.K."/>
            <person name="Weissman J.S."/>
        </authorList>
    </citation>
    <scope>LEVEL OF PROTEIN EXPRESSION [LARGE SCALE ANALYSIS]</scope>
</reference>
<reference key="7">
    <citation type="journal article" date="2006" name="EMBO J.">
        <title>Yeast homolog of a cancer-testis antigen defines a new transcription complex.</title>
        <authorList>
            <person name="Kisseleva-Romanova E."/>
            <person name="Lopreiato R."/>
            <person name="Baudin-Baillieu A."/>
            <person name="Rousselle J.-C."/>
            <person name="Ilan L."/>
            <person name="Hofmann K."/>
            <person name="Namane A."/>
            <person name="Mann C."/>
            <person name="Libri D."/>
        </authorList>
    </citation>
    <scope>IDENTIFICATION IN THE EKC/KEOPS COMPLEX</scope>
    <scope>FUNCTION OF THE EKC/KEOPS COMPLEX</scope>
    <scope>SUBCELLULAR LOCATION</scope>
    <scope>IDENTIFICATION BY MASS SPECTROMETRY</scope>
</reference>
<reference key="8">
    <citation type="journal article" date="2006" name="Cell">
        <title>A genome-wide screen identifies the evolutionarily conserved KEOPS complex as a telomere regulator.</title>
        <authorList>
            <person name="Downey M."/>
            <person name="Houlsworth R."/>
            <person name="Maringele L."/>
            <person name="Rollie A."/>
            <person name="Brehme M."/>
            <person name="Galicia S."/>
            <person name="Guillard S."/>
            <person name="Partington M."/>
            <person name="Zubko M.K."/>
            <person name="Krogan N.J."/>
            <person name="Emili A."/>
            <person name="Greenblatt J.F."/>
            <person name="Harrington L."/>
            <person name="Lydall D."/>
            <person name="Durocher D."/>
        </authorList>
    </citation>
    <scope>FUNCTION</scope>
    <scope>IDENTIFICATION IN THE EKC/KEOPS COMPLEX</scope>
</reference>
<reference key="9">
    <citation type="journal article" date="2011" name="EMBO J.">
        <title>The highly conserved KEOPS/EKC complex is essential for a universal tRNA modification, t6A.</title>
        <authorList>
            <person name="Srinivasan M."/>
            <person name="Mehta P."/>
            <person name="Yu Y."/>
            <person name="Prugar E."/>
            <person name="Koonin E.V."/>
            <person name="Karzai A.W."/>
            <person name="Sternglanz R."/>
        </authorList>
    </citation>
    <scope>FUNCTION IN T(6)A37 FORMATION</scope>
</reference>
<reference key="10">
    <citation type="journal article" date="2011" name="Nucleic Acids Res.">
        <title>Gcn4 misregulation reveals a direct role for the evolutionary conserved EKC/KEOPS in the t6A modification of tRNAs.</title>
        <authorList>
            <person name="Daugeron M.C."/>
            <person name="Lenstra T.L."/>
            <person name="Frizzarin M."/>
            <person name="El Yacoubi B."/>
            <person name="Liu X."/>
            <person name="Baudin-Baillieu A."/>
            <person name="Lijnzaad P."/>
            <person name="Decourty L."/>
            <person name="Saveanu C."/>
            <person name="Jacquier A."/>
            <person name="Holstege F.C."/>
            <person name="de Crecy-Lagard V."/>
            <person name="van Tilbeurgh H."/>
            <person name="Libri D."/>
        </authorList>
    </citation>
    <scope>FUNCTION IN T(6)A37 FORMATION</scope>
</reference>
<reference key="11">
    <citation type="journal article" date="2012" name="Proc. Natl. Acad. Sci. U.S.A.">
        <title>N-terminal acetylome analyses and functional insights of the N-terminal acetyltransferase NatB.</title>
        <authorList>
            <person name="Van Damme P."/>
            <person name="Lasa M."/>
            <person name="Polevoda B."/>
            <person name="Gazquez C."/>
            <person name="Elosegui-Artola A."/>
            <person name="Kim D.S."/>
            <person name="De Juan-Pardo E."/>
            <person name="Demeyer K."/>
            <person name="Hole K."/>
            <person name="Larrea E."/>
            <person name="Timmerman E."/>
            <person name="Prieto J."/>
            <person name="Arnesen T."/>
            <person name="Sherman F."/>
            <person name="Gevaert K."/>
            <person name="Aldabe R."/>
        </authorList>
    </citation>
    <scope>IDENTIFICATION BY MASS SPECTROMETRY [LARGE SCALE ANALYSIS]</scope>
</reference>
<reference key="12">
    <citation type="journal article" date="2013" name="Nucleic Acids Res.">
        <title>In vitro biosynthesis of a universal t6A tRNA modification in Archaea and Eukarya.</title>
        <authorList>
            <person name="Perrochia L."/>
            <person name="Crozat E."/>
            <person name="Hecker A."/>
            <person name="Zhang W."/>
            <person name="Bareille J."/>
            <person name="Collinet B."/>
            <person name="van Tilbeurgh H."/>
            <person name="Forterre P."/>
            <person name="Basta T."/>
        </authorList>
    </citation>
    <scope>FUNCTION IN T(6)A TRNA MODIFICATION</scope>
</reference>
<reference key="13">
    <citation type="journal article" date="2013" name="Nucleic Acids Res.">
        <title>Reconstitution and characterization of eukaryotic N6-threonylcarbamoylation of tRNA using a minimal enzyme system.</title>
        <authorList>
            <person name="Wan L.C."/>
            <person name="Mao D.Y."/>
            <person name="Neculai D."/>
            <person name="Strecker J."/>
            <person name="Chiovitti D."/>
            <person name="Kurinov I."/>
            <person name="Poda G."/>
            <person name="Thevakumaran N."/>
            <person name="Yuan F."/>
            <person name="Szilard R.K."/>
            <person name="Lissina E."/>
            <person name="Nislow C."/>
            <person name="Caudy A.A."/>
            <person name="Durocher D."/>
            <person name="Sicheri F."/>
        </authorList>
    </citation>
    <scope>FUNCTION IN THE EKC/KEOPS COMPLEX</scope>
</reference>
<name>GON7_YEAST</name>
<organism>
    <name type="scientific">Saccharomyces cerevisiae (strain ATCC 204508 / S288c)</name>
    <name type="common">Baker's yeast</name>
    <dbReference type="NCBI Taxonomy" id="559292"/>
    <lineage>
        <taxon>Eukaryota</taxon>
        <taxon>Fungi</taxon>
        <taxon>Dikarya</taxon>
        <taxon>Ascomycota</taxon>
        <taxon>Saccharomycotina</taxon>
        <taxon>Saccharomycetes</taxon>
        <taxon>Saccharomycetales</taxon>
        <taxon>Saccharomycetaceae</taxon>
        <taxon>Saccharomyces</taxon>
    </lineage>
</organism>
<evidence type="ECO:0000256" key="1">
    <source>
        <dbReference type="SAM" id="MobiDB-lite"/>
    </source>
</evidence>
<evidence type="ECO:0000269" key="2">
    <source>
    </source>
</evidence>
<evidence type="ECO:0000269" key="3">
    <source>
    </source>
</evidence>
<evidence type="ECO:0000269" key="4">
    <source>
    </source>
</evidence>
<evidence type="ECO:0000269" key="5">
    <source>
    </source>
</evidence>
<evidence type="ECO:0000269" key="6">
    <source>
    </source>
</evidence>
<evidence type="ECO:0000269" key="7">
    <source>
    </source>
</evidence>
<evidence type="ECO:0000269" key="8">
    <source>
    </source>
</evidence>
<evidence type="ECO:0000269" key="9">
    <source>
    </source>
</evidence>
<evidence type="ECO:0000305" key="10"/>
<evidence type="ECO:0000305" key="11">
    <source>
    </source>
</evidence>
<evidence type="ECO:0007829" key="12">
    <source>
        <dbReference type="PDB" id="4WXA"/>
    </source>
</evidence>
<comment type="function">
    <text evidence="4 5 6 7 8 9">Component of the EKC/KEOPS complex that is required for the formation of a threonylcarbamoyl group on adenosine at position 37 (t(6)A37) in tRNAs that read codons beginning with adenine. The complex is probably involved in the transfer of the threonylcarbamoyl moiety of threonylcarbamoyl-AMP (TC-AMP) to the N6 group of A37. GON7 likely plays a supporting role to the catalytic subunit KAE1 in the complex. The EKC/KEOPS complex also promotes both telomere uncapping and telomere elongation. The complex is required for efficient recruitment of transcriptional coactivators.</text>
</comment>
<comment type="subunit">
    <text evidence="4 5">Component of the EKC/KEOPS complex composed of at least BUD32, CGI121, GON7, KAE1 and PCC1; the whole complex dimerizes.</text>
</comment>
<comment type="interaction">
    <interactant intactId="EBI-26178">
        <id>P46984</id>
    </interactant>
    <interactant intactId="EBI-3809">
        <id>P53323</id>
        <label>BUD32</label>
    </interactant>
    <organismsDiffer>false</organismsDiffer>
    <experiments>7</experiments>
</comment>
<comment type="interaction">
    <interactant intactId="EBI-26178">
        <id>P46984</id>
    </interactant>
    <interactant intactId="EBI-26411">
        <id>P36132</id>
        <label>KAE1</label>
    </interactant>
    <organismsDiffer>false</organismsDiffer>
    <experiments>9</experiments>
</comment>
<comment type="subcellular location">
    <subcellularLocation>
        <location evidence="5">Nucleus</location>
    </subcellularLocation>
    <subcellularLocation>
        <location evidence="11">Chromosome</location>
        <location evidence="11">Telomere</location>
    </subcellularLocation>
</comment>
<comment type="induction">
    <text evidence="2">Accumulates in response to hyperosmostic conditions.</text>
</comment>
<comment type="miscellaneous">
    <text evidence="3">Present with 2180 molecules/cell in log phase SD medium.</text>
</comment>
<comment type="similarity">
    <text evidence="10">Belongs to the GON7 family.</text>
</comment>
<accession>P46984</accession>
<accession>D6VW06</accession>
<protein>
    <recommendedName>
        <fullName>EKC/KEOPS complex subunit GON7</fullName>
    </recommendedName>
    <alternativeName>
        <fullName>Low-dye-binding protein 6</fullName>
    </alternativeName>
    <alternativeName>
        <fullName>Polarized growth chromatin-associated controller 2</fullName>
    </alternativeName>
</protein>
<dbReference type="EMBL" id="Z49459">
    <property type="protein sequence ID" value="CAA89479.1"/>
    <property type="molecule type" value="Genomic_DNA"/>
</dbReference>
<dbReference type="EMBL" id="AY558252">
    <property type="protein sequence ID" value="AAS56578.1"/>
    <property type="molecule type" value="Genomic_DNA"/>
</dbReference>
<dbReference type="EMBL" id="BK006943">
    <property type="protein sequence ID" value="DAA08622.1"/>
    <property type="molecule type" value="Genomic_DNA"/>
</dbReference>
<dbReference type="PIR" id="S56967">
    <property type="entry name" value="S56967"/>
</dbReference>
<dbReference type="RefSeq" id="NP_012351.1">
    <property type="nucleotide sequence ID" value="NM_001181617.1"/>
</dbReference>
<dbReference type="PDB" id="4WX8">
    <property type="method" value="X-ray"/>
    <property type="resolution" value="2.99 A"/>
    <property type="chains" value="D/E/F=1-123"/>
</dbReference>
<dbReference type="PDB" id="4WXA">
    <property type="method" value="X-ray"/>
    <property type="resolution" value="2.44 A"/>
    <property type="chains" value="D/E/F=1-123"/>
</dbReference>
<dbReference type="PDBsum" id="4WX8"/>
<dbReference type="PDBsum" id="4WXA"/>
<dbReference type="SMR" id="P46984"/>
<dbReference type="BioGRID" id="33578">
    <property type="interactions" value="42"/>
</dbReference>
<dbReference type="ComplexPortal" id="CPX-995">
    <property type="entry name" value="KEOPS tRNA N6-adenosine threonylcarbamoyltransferase complex"/>
</dbReference>
<dbReference type="DIP" id="DIP-1474N"/>
<dbReference type="FunCoup" id="P46984">
    <property type="interactions" value="52"/>
</dbReference>
<dbReference type="IntAct" id="P46984">
    <property type="interactions" value="11"/>
</dbReference>
<dbReference type="MINT" id="P46984"/>
<dbReference type="STRING" id="4932.YJL184W"/>
<dbReference type="iPTMnet" id="P46984"/>
<dbReference type="PaxDb" id="4932-YJL184W"/>
<dbReference type="PeptideAtlas" id="P46984"/>
<dbReference type="EnsemblFungi" id="YJL184W_mRNA">
    <property type="protein sequence ID" value="YJL184W"/>
    <property type="gene ID" value="YJL184W"/>
</dbReference>
<dbReference type="GeneID" id="853255"/>
<dbReference type="KEGG" id="sce:YJL184W"/>
<dbReference type="AGR" id="SGD:S000003720"/>
<dbReference type="SGD" id="S000003720">
    <property type="gene designation" value="GON7"/>
</dbReference>
<dbReference type="VEuPathDB" id="FungiDB:YJL184W"/>
<dbReference type="eggNOG" id="ENOG502S429">
    <property type="taxonomic scope" value="Eukaryota"/>
</dbReference>
<dbReference type="HOGENOM" id="CLU_151420_1_0_1"/>
<dbReference type="InParanoid" id="P46984"/>
<dbReference type="OMA" id="QDHLNIF"/>
<dbReference type="OrthoDB" id="2288868at2759"/>
<dbReference type="BioCyc" id="MetaCyc:G3O-31618-MONOMER"/>
<dbReference type="BioCyc" id="YEAST:G3O-31618-MONOMER"/>
<dbReference type="BioGRID-ORCS" id="853255">
    <property type="hits" value="10 hits in 10 CRISPR screens"/>
</dbReference>
<dbReference type="PRO" id="PR:P46984"/>
<dbReference type="Proteomes" id="UP000002311">
    <property type="component" value="Chromosome X"/>
</dbReference>
<dbReference type="RNAct" id="P46984">
    <property type="molecule type" value="protein"/>
</dbReference>
<dbReference type="GO" id="GO:0000785">
    <property type="term" value="C:chromatin"/>
    <property type="evidence" value="ECO:0000314"/>
    <property type="project" value="SGD"/>
</dbReference>
<dbReference type="GO" id="GO:0000781">
    <property type="term" value="C:chromosome, telomeric region"/>
    <property type="evidence" value="ECO:0007669"/>
    <property type="project" value="UniProtKB-SubCell"/>
</dbReference>
<dbReference type="GO" id="GO:0000408">
    <property type="term" value="C:EKC/KEOPS complex"/>
    <property type="evidence" value="ECO:0000314"/>
    <property type="project" value="SGD"/>
</dbReference>
<dbReference type="GO" id="GO:0005634">
    <property type="term" value="C:nucleus"/>
    <property type="evidence" value="ECO:0007669"/>
    <property type="project" value="UniProtKB-SubCell"/>
</dbReference>
<dbReference type="GO" id="GO:0031490">
    <property type="term" value="F:chromatin DNA binding"/>
    <property type="evidence" value="ECO:0000314"/>
    <property type="project" value="SGD"/>
</dbReference>
<dbReference type="GO" id="GO:0060090">
    <property type="term" value="F:molecular adaptor activity"/>
    <property type="evidence" value="ECO:0000269"/>
    <property type="project" value="DisProt"/>
</dbReference>
<dbReference type="GO" id="GO:0000032">
    <property type="term" value="P:cell wall mannoprotein biosynthetic process"/>
    <property type="evidence" value="ECO:0000315"/>
    <property type="project" value="SGD"/>
</dbReference>
<dbReference type="GO" id="GO:1990145">
    <property type="term" value="P:maintenance of translational fidelity"/>
    <property type="evidence" value="ECO:0000303"/>
    <property type="project" value="ComplexPortal"/>
</dbReference>
<dbReference type="GO" id="GO:0045944">
    <property type="term" value="P:positive regulation of transcription by RNA polymerase II"/>
    <property type="evidence" value="ECO:0000353"/>
    <property type="project" value="SGD"/>
</dbReference>
<dbReference type="GO" id="GO:0000723">
    <property type="term" value="P:telomere maintenance"/>
    <property type="evidence" value="ECO:0000315"/>
    <property type="project" value="SGD"/>
</dbReference>
<dbReference type="GO" id="GO:0000722">
    <property type="term" value="P:telomere maintenance via recombination"/>
    <property type="evidence" value="ECO:0000316"/>
    <property type="project" value="SGD"/>
</dbReference>
<dbReference type="GO" id="GO:0002949">
    <property type="term" value="P:tRNA threonylcarbamoyladenosine modification"/>
    <property type="evidence" value="ECO:0000303"/>
    <property type="project" value="ComplexPortal"/>
</dbReference>
<dbReference type="DisProt" id="DP00958"/>
<dbReference type="InterPro" id="IPR014849">
    <property type="entry name" value="EKC/KEOPS_Gon7"/>
</dbReference>
<dbReference type="Pfam" id="PF08738">
    <property type="entry name" value="Gon7"/>
    <property type="match status" value="1"/>
</dbReference>
<proteinExistence type="evidence at protein level"/>
<keyword id="KW-0002">3D-structure</keyword>
<keyword id="KW-0010">Activator</keyword>
<keyword id="KW-0158">Chromosome</keyword>
<keyword id="KW-0539">Nucleus</keyword>
<keyword id="KW-1185">Reference proteome</keyword>
<keyword id="KW-0779">Telomere</keyword>
<keyword id="KW-0804">Transcription</keyword>
<keyword id="KW-0805">Transcription regulation</keyword>
<keyword id="KW-0819">tRNA processing</keyword>
<feature type="chain" id="PRO_0000203021" description="EKC/KEOPS complex subunit GON7">
    <location>
        <begin position="1"/>
        <end position="123"/>
    </location>
</feature>
<feature type="region of interest" description="Disordered" evidence="1">
    <location>
        <begin position="1"/>
        <end position="63"/>
    </location>
</feature>
<feature type="compositionally biased region" description="Basic and acidic residues" evidence="1">
    <location>
        <begin position="47"/>
        <end position="60"/>
    </location>
</feature>
<feature type="strand" evidence="12">
    <location>
        <begin position="6"/>
        <end position="10"/>
    </location>
</feature>
<feature type="turn" evidence="12">
    <location>
        <begin position="11"/>
        <end position="13"/>
    </location>
</feature>
<feature type="strand" evidence="12">
    <location>
        <begin position="14"/>
        <end position="18"/>
    </location>
</feature>
<feature type="helix" evidence="12">
    <location>
        <begin position="66"/>
        <end position="94"/>
    </location>
</feature>
<feature type="helix" evidence="12">
    <location>
        <begin position="99"/>
        <end position="111"/>
    </location>
</feature>